<evidence type="ECO:0000250" key="1">
    <source>
        <dbReference type="UniProtKB" id="P0A7E5"/>
    </source>
</evidence>
<evidence type="ECO:0000255" key="2">
    <source>
        <dbReference type="PROSITE-ProRule" id="PRU00605"/>
    </source>
</evidence>
<evidence type="ECO:0000305" key="3"/>
<organism>
    <name type="scientific">Mycoplasma capricolum subsp. capripneumoniae</name>
    <dbReference type="NCBI Taxonomy" id="40480"/>
    <lineage>
        <taxon>Bacteria</taxon>
        <taxon>Bacillati</taxon>
        <taxon>Mycoplasmatota</taxon>
        <taxon>Mollicutes</taxon>
        <taxon>Mycoplasmataceae</taxon>
        <taxon>Mycoplasma</taxon>
    </lineage>
</organism>
<protein>
    <recommendedName>
        <fullName evidence="1">CTP synthase</fullName>
        <ecNumber evidence="1">6.3.4.2</ecNumber>
    </recommendedName>
    <alternativeName>
        <fullName evidence="1">Cytidine 5'-triphosphate synthase</fullName>
    </alternativeName>
    <alternativeName>
        <fullName evidence="1">Cytidine triphosphate synthetase</fullName>
        <shortName evidence="1">CTP synthetase</shortName>
        <shortName evidence="1">CTPS</shortName>
    </alternativeName>
    <alternativeName>
        <fullName evidence="1">UTP--ammonia ligase</fullName>
    </alternativeName>
</protein>
<feature type="chain" id="PRO_0000138200" description="CTP synthase">
    <location>
        <begin position="1" status="less than"/>
        <end position="99"/>
    </location>
</feature>
<feature type="domain" description="Glutamine amidotransferase type-1" evidence="2">
    <location>
        <begin position="1" status="less than"/>
        <end position="99"/>
    </location>
</feature>
<feature type="active site" evidence="1">
    <location>
        <position position="73"/>
    </location>
</feature>
<feature type="active site" evidence="1">
    <location>
        <position position="75"/>
    </location>
</feature>
<feature type="binding site" evidence="1">
    <location>
        <position position="28"/>
    </location>
    <ligand>
        <name>L-glutamine</name>
        <dbReference type="ChEBI" id="CHEBI:58359"/>
    </ligand>
</feature>
<feature type="non-terminal residue">
    <location>
        <position position="1"/>
    </location>
</feature>
<sequence>TMVTKLEKDSLVSKLYNSDVALERHRHRYEFNNKYKKDLESVGLRFSGIYEEKNLVEVIEIPSLKFFVASQFHPEFTSRPNKPTPLFKGFIKAIIENNK</sequence>
<comment type="function">
    <text evidence="1">Catalyzes the ATP-dependent amination of UTP to CTP with either L-glutamine or ammonia as the source of nitrogen. Regulates intracellular CTP levels through interactions with the four ribonucleotide triphosphates.</text>
</comment>
<comment type="catalytic activity">
    <reaction evidence="1">
        <text>UTP + L-glutamine + ATP + H2O = CTP + L-glutamate + ADP + phosphate + 2 H(+)</text>
        <dbReference type="Rhea" id="RHEA:26426"/>
        <dbReference type="ChEBI" id="CHEBI:15377"/>
        <dbReference type="ChEBI" id="CHEBI:15378"/>
        <dbReference type="ChEBI" id="CHEBI:29985"/>
        <dbReference type="ChEBI" id="CHEBI:30616"/>
        <dbReference type="ChEBI" id="CHEBI:37563"/>
        <dbReference type="ChEBI" id="CHEBI:43474"/>
        <dbReference type="ChEBI" id="CHEBI:46398"/>
        <dbReference type="ChEBI" id="CHEBI:58359"/>
        <dbReference type="ChEBI" id="CHEBI:456216"/>
        <dbReference type="EC" id="6.3.4.2"/>
    </reaction>
</comment>
<comment type="catalytic activity">
    <reaction evidence="1">
        <text>L-glutamine + H2O = L-glutamate + NH4(+)</text>
        <dbReference type="Rhea" id="RHEA:15889"/>
        <dbReference type="ChEBI" id="CHEBI:15377"/>
        <dbReference type="ChEBI" id="CHEBI:28938"/>
        <dbReference type="ChEBI" id="CHEBI:29985"/>
        <dbReference type="ChEBI" id="CHEBI:58359"/>
    </reaction>
</comment>
<comment type="catalytic activity">
    <reaction evidence="1">
        <text>UTP + NH4(+) + ATP = CTP + ADP + phosphate + 2 H(+)</text>
        <dbReference type="Rhea" id="RHEA:16597"/>
        <dbReference type="ChEBI" id="CHEBI:15378"/>
        <dbReference type="ChEBI" id="CHEBI:28938"/>
        <dbReference type="ChEBI" id="CHEBI:30616"/>
        <dbReference type="ChEBI" id="CHEBI:37563"/>
        <dbReference type="ChEBI" id="CHEBI:43474"/>
        <dbReference type="ChEBI" id="CHEBI:46398"/>
        <dbReference type="ChEBI" id="CHEBI:456216"/>
    </reaction>
</comment>
<comment type="activity regulation">
    <text evidence="1">Allosterically activated by GTP, when glutamine is the substrate; GTP has no effect on the reaction when ammonia is the substrate. The allosteric effector GTP functions by stabilizing the protein conformation that binds the tetrahedral intermediate(s) formed during glutamine hydrolysis. Inhibited by the product CTP, via allosteric rather than competitive inhibition.</text>
</comment>
<comment type="pathway">
    <text evidence="1">Pyrimidine metabolism; CTP biosynthesis via de novo pathway; CTP from UDP: step 2/2.</text>
</comment>
<comment type="subunit">
    <text evidence="1">Homotetramer.</text>
</comment>
<comment type="miscellaneous">
    <text evidence="1">CTPSs have evolved a hybrid strategy for distinguishing between UTP and CTP. The overlapping regions of the product feedback inhibitory and substrate sites recognize a common feature in both compounds, the triphosphate moiety. To differentiate isosteric substrate and product pyrimidine rings, an additional pocket far from the expected kinase/ligase catalytic site, specifically recognizes the cytosine and ribose portions of the product inhibitor.</text>
</comment>
<comment type="similarity">
    <text evidence="3">Belongs to the CTP synthase family.</text>
</comment>
<gene>
    <name evidence="1" type="primary">pyrG</name>
</gene>
<accession>Q93DW6</accession>
<proteinExistence type="inferred from homology"/>
<keyword id="KW-0067">ATP-binding</keyword>
<keyword id="KW-0315">Glutamine amidotransferase</keyword>
<keyword id="KW-0436">Ligase</keyword>
<keyword id="KW-0460">Magnesium</keyword>
<keyword id="KW-0479">Metal-binding</keyword>
<keyword id="KW-0547">Nucleotide-binding</keyword>
<keyword id="KW-0665">Pyrimidine biosynthesis</keyword>
<dbReference type="EC" id="6.3.4.2" evidence="1"/>
<dbReference type="EMBL" id="AF378157">
    <property type="protein sequence ID" value="AAK96434.1"/>
    <property type="molecule type" value="Genomic_DNA"/>
</dbReference>
<dbReference type="SMR" id="Q93DW6"/>
<dbReference type="STRING" id="40480.BVA24_00695"/>
<dbReference type="UniPathway" id="UPA00159">
    <property type="reaction ID" value="UER00277"/>
</dbReference>
<dbReference type="GO" id="GO:0005829">
    <property type="term" value="C:cytosol"/>
    <property type="evidence" value="ECO:0007669"/>
    <property type="project" value="TreeGrafter"/>
</dbReference>
<dbReference type="GO" id="GO:0005524">
    <property type="term" value="F:ATP binding"/>
    <property type="evidence" value="ECO:0007669"/>
    <property type="project" value="UniProtKB-KW"/>
</dbReference>
<dbReference type="GO" id="GO:0003883">
    <property type="term" value="F:CTP synthase activity"/>
    <property type="evidence" value="ECO:0007669"/>
    <property type="project" value="UniProtKB-EC"/>
</dbReference>
<dbReference type="GO" id="GO:0004359">
    <property type="term" value="F:glutaminase activity"/>
    <property type="evidence" value="ECO:0007669"/>
    <property type="project" value="RHEA"/>
</dbReference>
<dbReference type="GO" id="GO:0042802">
    <property type="term" value="F:identical protein binding"/>
    <property type="evidence" value="ECO:0007669"/>
    <property type="project" value="TreeGrafter"/>
</dbReference>
<dbReference type="GO" id="GO:0046872">
    <property type="term" value="F:metal ion binding"/>
    <property type="evidence" value="ECO:0007669"/>
    <property type="project" value="UniProtKB-KW"/>
</dbReference>
<dbReference type="GO" id="GO:0044210">
    <property type="term" value="P:'de novo' CTP biosynthetic process"/>
    <property type="evidence" value="ECO:0007669"/>
    <property type="project" value="UniProtKB-UniPathway"/>
</dbReference>
<dbReference type="GO" id="GO:0019856">
    <property type="term" value="P:pyrimidine nucleobase biosynthetic process"/>
    <property type="evidence" value="ECO:0007669"/>
    <property type="project" value="TreeGrafter"/>
</dbReference>
<dbReference type="Gene3D" id="3.40.50.880">
    <property type="match status" value="1"/>
</dbReference>
<dbReference type="InterPro" id="IPR029062">
    <property type="entry name" value="Class_I_gatase-like"/>
</dbReference>
<dbReference type="InterPro" id="IPR004468">
    <property type="entry name" value="CTP_synthase"/>
</dbReference>
<dbReference type="InterPro" id="IPR017926">
    <property type="entry name" value="GATASE"/>
</dbReference>
<dbReference type="PANTHER" id="PTHR11550">
    <property type="entry name" value="CTP SYNTHASE"/>
    <property type="match status" value="1"/>
</dbReference>
<dbReference type="PANTHER" id="PTHR11550:SF0">
    <property type="entry name" value="CTP SYNTHASE-RELATED"/>
    <property type="match status" value="1"/>
</dbReference>
<dbReference type="Pfam" id="PF00117">
    <property type="entry name" value="GATase"/>
    <property type="match status" value="1"/>
</dbReference>
<dbReference type="SUPFAM" id="SSF52317">
    <property type="entry name" value="Class I glutamine amidotransferase-like"/>
    <property type="match status" value="1"/>
</dbReference>
<dbReference type="PROSITE" id="PS51273">
    <property type="entry name" value="GATASE_TYPE_1"/>
    <property type="match status" value="1"/>
</dbReference>
<name>PYRG_MYCCC</name>
<reference key="1">
    <citation type="journal article" date="2002" name="Vet. Microbiol.">
        <title>Genetic evolution of Mycoplasma capricolum subsp. capripneumoniae strains and molecular epidemiology of contagious caprine pleuropneumonia by sequencing of locus H2.</title>
        <authorList>
            <person name="Lorenzon S."/>
            <person name="Wesonga H."/>
            <person name="Ygesu L."/>
            <person name="Tekleghiorgis T."/>
            <person name="Maikano Y."/>
            <person name="Angaya M."/>
            <person name="Hendrikx P."/>
            <person name="Thiaucourt F."/>
        </authorList>
    </citation>
    <scope>NUCLEOTIDE SEQUENCE [GENOMIC DNA]</scope>
    <source>
        <strain>Gabes</strain>
    </source>
</reference>